<feature type="chain" id="PRO_0000451461" description="Nicotinate N-methyltransferase 1">
    <location>
        <begin position="1"/>
        <end position="365"/>
    </location>
</feature>
<feature type="binding site" evidence="1">
    <location>
        <position position="232"/>
    </location>
    <ligand>
        <name>S-adenosyl-L-methionine</name>
        <dbReference type="ChEBI" id="CHEBI:59789"/>
    </ligand>
</feature>
<accession>Q6K9X3</accession>
<accession>A0A0P0VRE1</accession>
<organism>
    <name type="scientific">Oryza sativa subsp. japonica</name>
    <name type="common">Rice</name>
    <dbReference type="NCBI Taxonomy" id="39947"/>
    <lineage>
        <taxon>Eukaryota</taxon>
        <taxon>Viridiplantae</taxon>
        <taxon>Streptophyta</taxon>
        <taxon>Embryophyta</taxon>
        <taxon>Tracheophyta</taxon>
        <taxon>Spermatophyta</taxon>
        <taxon>Magnoliopsida</taxon>
        <taxon>Liliopsida</taxon>
        <taxon>Poales</taxon>
        <taxon>Poaceae</taxon>
        <taxon>BOP clade</taxon>
        <taxon>Oryzoideae</taxon>
        <taxon>Oryzeae</taxon>
        <taxon>Oryzinae</taxon>
        <taxon>Oryza</taxon>
        <taxon>Oryza sativa</taxon>
    </lineage>
</organism>
<comment type="function">
    <text evidence="2">Involved in nicotinate detoxification in planta (PubMed:28533213). Catalyzes the conversion of nicotinate to N-methylnicotinate, which is a detoxified form of endogenous nicotinate in planta (PubMed:28533213).</text>
</comment>
<comment type="catalytic activity">
    <reaction evidence="2">
        <text>nicotinate + S-adenosyl-L-methionine = N-methylnicotinate + S-adenosyl-L-homocysteine</text>
        <dbReference type="Rhea" id="RHEA:20241"/>
        <dbReference type="ChEBI" id="CHEBI:18123"/>
        <dbReference type="ChEBI" id="CHEBI:32544"/>
        <dbReference type="ChEBI" id="CHEBI:57856"/>
        <dbReference type="ChEBI" id="CHEBI:59789"/>
        <dbReference type="EC" id="2.1.1.7"/>
    </reaction>
    <physiologicalReaction direction="left-to-right" evidence="2">
        <dbReference type="Rhea" id="RHEA:20242"/>
    </physiologicalReaction>
</comment>
<comment type="biophysicochemical properties">
    <kinetics>
        <KM evidence="2">43.62 uM for nicotinate</KM>
        <KM evidence="2">67.26 uM for S-adenosyl-L-methionine</KM>
        <text evidence="2">kcat is 2.25 sec(-1) with nicotinate as substrate (PubMed:28533213). kcat is 2.07 sec(-1) with S-adenosyl-L-methionine as substrate (PubMed:28533213).</text>
    </kinetics>
</comment>
<comment type="similarity">
    <text evidence="3">Belongs to the class I-like SAM-binding methyltransferase superfamily. Cation-independent O-methyltransferase family.</text>
</comment>
<sequence length="365" mass="38647">MGGGGDGELSPAEARLAMMELANMISVPMALTAVIRLGVPAKLWAGGANAPLAAADLLPAGHPDPSVLERLLRLLASRGVFSEHTGSSSPSPRRFSLTAVGRTLVPGGGGSPSGSGASYADYVLQHHQDALVRAWPLLHEAVLDPSGPEPFARANAGVPAYAYYGKDREANEVMLRAMTGVSEPFMEALLEGYGDGGFEGVSTLVDVGGSSGACLEMIMRRVRTIRDGVNFDLPDVVAAAPPIPGVRHVGGDMFKSIPSGDAIFMKWVLTTWTNEECTAILSNCHKALPGGGKVIACEPVVPDTTDGSTRTRALLENDIFVMATYRTQGRERSEEEFRHLGLAAGFASFRAIYLDPFYAVLEYTK</sequence>
<gene>
    <name evidence="3" type="primary">NANMT1</name>
    <name evidence="6" type="ordered locus">Os02g0823400</name>
    <name evidence="3" type="ordered locus">LOC_Os02g57760</name>
    <name evidence="4" type="ORF">OJ1063_D06.1</name>
    <name evidence="5" type="ORF">OJ1136_C04.9</name>
    <name evidence="7" type="ORF">OsJ_08933</name>
</gene>
<name>NAMT1_ORYSJ</name>
<keyword id="KW-0489">Methyltransferase</keyword>
<keyword id="KW-1185">Reference proteome</keyword>
<keyword id="KW-0949">S-adenosyl-L-methionine</keyword>
<keyword id="KW-0808">Transferase</keyword>
<evidence type="ECO:0000255" key="1">
    <source>
        <dbReference type="PROSITE-ProRule" id="PRU01020"/>
    </source>
</evidence>
<evidence type="ECO:0000269" key="2">
    <source>
    </source>
</evidence>
<evidence type="ECO:0000305" key="3"/>
<evidence type="ECO:0000312" key="4">
    <source>
        <dbReference type="EMBL" id="BAD22855.1"/>
    </source>
</evidence>
<evidence type="ECO:0000312" key="5">
    <source>
        <dbReference type="EMBL" id="BAD22923.1"/>
    </source>
</evidence>
<evidence type="ECO:0000312" key="6">
    <source>
        <dbReference type="EMBL" id="BAS81660.1"/>
    </source>
</evidence>
<evidence type="ECO:0000312" key="7">
    <source>
        <dbReference type="EMBL" id="EEE58073.1"/>
    </source>
</evidence>
<reference key="1">
    <citation type="journal article" date="2005" name="Nature">
        <title>The map-based sequence of the rice genome.</title>
        <authorList>
            <consortium name="International rice genome sequencing project (IRGSP)"/>
        </authorList>
    </citation>
    <scope>NUCLEOTIDE SEQUENCE [LARGE SCALE GENOMIC DNA]</scope>
    <source>
        <strain>cv. Nipponbare</strain>
    </source>
</reference>
<reference key="2">
    <citation type="journal article" date="2008" name="Nucleic Acids Res.">
        <title>The rice annotation project database (RAP-DB): 2008 update.</title>
        <authorList>
            <consortium name="The rice annotation project (RAP)"/>
        </authorList>
    </citation>
    <scope>GENOME REANNOTATION</scope>
    <source>
        <strain>cv. Nipponbare</strain>
    </source>
</reference>
<reference key="3">
    <citation type="journal article" date="2013" name="Rice">
        <title>Improvement of the Oryza sativa Nipponbare reference genome using next generation sequence and optical map data.</title>
        <authorList>
            <person name="Kawahara Y."/>
            <person name="de la Bastide M."/>
            <person name="Hamilton J.P."/>
            <person name="Kanamori H."/>
            <person name="McCombie W.R."/>
            <person name="Ouyang S."/>
            <person name="Schwartz D.C."/>
            <person name="Tanaka T."/>
            <person name="Wu J."/>
            <person name="Zhou S."/>
            <person name="Childs K.L."/>
            <person name="Davidson R.M."/>
            <person name="Lin H."/>
            <person name="Quesada-Ocampo L."/>
            <person name="Vaillancourt B."/>
            <person name="Sakai H."/>
            <person name="Lee S.S."/>
            <person name="Kim J."/>
            <person name="Numa H."/>
            <person name="Itoh T."/>
            <person name="Buell C.R."/>
            <person name="Matsumoto T."/>
        </authorList>
    </citation>
    <scope>GENOME REANNOTATION</scope>
    <source>
        <strain>cv. Nipponbare</strain>
    </source>
</reference>
<reference key="4">
    <citation type="journal article" date="2005" name="PLoS Biol.">
        <title>The genomes of Oryza sativa: a history of duplications.</title>
        <authorList>
            <person name="Yu J."/>
            <person name="Wang J."/>
            <person name="Lin W."/>
            <person name="Li S."/>
            <person name="Li H."/>
            <person name="Zhou J."/>
            <person name="Ni P."/>
            <person name="Dong W."/>
            <person name="Hu S."/>
            <person name="Zeng C."/>
            <person name="Zhang J."/>
            <person name="Zhang Y."/>
            <person name="Li R."/>
            <person name="Xu Z."/>
            <person name="Li S."/>
            <person name="Li X."/>
            <person name="Zheng H."/>
            <person name="Cong L."/>
            <person name="Lin L."/>
            <person name="Yin J."/>
            <person name="Geng J."/>
            <person name="Li G."/>
            <person name="Shi J."/>
            <person name="Liu J."/>
            <person name="Lv H."/>
            <person name="Li J."/>
            <person name="Wang J."/>
            <person name="Deng Y."/>
            <person name="Ran L."/>
            <person name="Shi X."/>
            <person name="Wang X."/>
            <person name="Wu Q."/>
            <person name="Li C."/>
            <person name="Ren X."/>
            <person name="Wang J."/>
            <person name="Wang X."/>
            <person name="Li D."/>
            <person name="Liu D."/>
            <person name="Zhang X."/>
            <person name="Ji Z."/>
            <person name="Zhao W."/>
            <person name="Sun Y."/>
            <person name="Zhang Z."/>
            <person name="Bao J."/>
            <person name="Han Y."/>
            <person name="Dong L."/>
            <person name="Ji J."/>
            <person name="Chen P."/>
            <person name="Wu S."/>
            <person name="Liu J."/>
            <person name="Xiao Y."/>
            <person name="Bu D."/>
            <person name="Tan J."/>
            <person name="Yang L."/>
            <person name="Ye C."/>
            <person name="Zhang J."/>
            <person name="Xu J."/>
            <person name="Zhou Y."/>
            <person name="Yu Y."/>
            <person name="Zhang B."/>
            <person name="Zhuang S."/>
            <person name="Wei H."/>
            <person name="Liu B."/>
            <person name="Lei M."/>
            <person name="Yu H."/>
            <person name="Li Y."/>
            <person name="Xu H."/>
            <person name="Wei S."/>
            <person name="He X."/>
            <person name="Fang L."/>
            <person name="Zhang Z."/>
            <person name="Zhang Y."/>
            <person name="Huang X."/>
            <person name="Su Z."/>
            <person name="Tong W."/>
            <person name="Li J."/>
            <person name="Tong Z."/>
            <person name="Li S."/>
            <person name="Ye J."/>
            <person name="Wang L."/>
            <person name="Fang L."/>
            <person name="Lei T."/>
            <person name="Chen C.-S."/>
            <person name="Chen H.-C."/>
            <person name="Xu Z."/>
            <person name="Li H."/>
            <person name="Huang H."/>
            <person name="Zhang F."/>
            <person name="Xu H."/>
            <person name="Li N."/>
            <person name="Zhao C."/>
            <person name="Li S."/>
            <person name="Dong L."/>
            <person name="Huang Y."/>
            <person name="Li L."/>
            <person name="Xi Y."/>
            <person name="Qi Q."/>
            <person name="Li W."/>
            <person name="Zhang B."/>
            <person name="Hu W."/>
            <person name="Zhang Y."/>
            <person name="Tian X."/>
            <person name="Jiao Y."/>
            <person name="Liang X."/>
            <person name="Jin J."/>
            <person name="Gao L."/>
            <person name="Zheng W."/>
            <person name="Hao B."/>
            <person name="Liu S.-M."/>
            <person name="Wang W."/>
            <person name="Yuan L."/>
            <person name="Cao M."/>
            <person name="McDermott J."/>
            <person name="Samudrala R."/>
            <person name="Wang J."/>
            <person name="Wong G.K.-S."/>
            <person name="Yang H."/>
        </authorList>
    </citation>
    <scope>NUCLEOTIDE SEQUENCE [LARGE SCALE GENOMIC DNA]</scope>
    <source>
        <strain>cv. Nipponbare</strain>
    </source>
</reference>
<reference key="5">
    <citation type="journal article" date="2003" name="Science">
        <title>Collection, mapping, and annotation of over 28,000 cDNA clones from japonica rice.</title>
        <authorList>
            <consortium name="The rice full-length cDNA consortium"/>
        </authorList>
    </citation>
    <scope>NUCLEOTIDE SEQUENCE [LARGE SCALE MRNA]</scope>
    <source>
        <strain>cv. Nipponbare</strain>
    </source>
</reference>
<reference key="6">
    <citation type="journal article" date="2017" name="Plant Physiol.">
        <title>A novel N-methyltransferase in Arabidopsis appears to feed a conserved pathway for nicotinate detoxification among land plants and is associated with lignin biosynthesis.</title>
        <authorList>
            <person name="Li W."/>
            <person name="Zhang F."/>
            <person name="Wu R."/>
            <person name="Jia L."/>
            <person name="Li G."/>
            <person name="Guo Y."/>
            <person name="Liu C."/>
            <person name="Wang G."/>
        </authorList>
    </citation>
    <scope>FUNCTION</scope>
    <scope>CATALYTIC ACTIVITY</scope>
    <scope>BIOPHYSICOCHEMICAL PROPERTIES</scope>
</reference>
<dbReference type="EC" id="2.1.1.7" evidence="2"/>
<dbReference type="EMBL" id="AP003989">
    <property type="protein sequence ID" value="BAD22855.1"/>
    <property type="molecule type" value="Genomic_DNA"/>
</dbReference>
<dbReference type="EMBL" id="AP008208">
    <property type="protein sequence ID" value="BAF10483.1"/>
    <property type="molecule type" value="Genomic_DNA"/>
</dbReference>
<dbReference type="EMBL" id="AP004026">
    <property type="protein sequence ID" value="BAD22923.1"/>
    <property type="molecule type" value="Genomic_DNA"/>
</dbReference>
<dbReference type="EMBL" id="AP014958">
    <property type="protein sequence ID" value="BAS81660.1"/>
    <property type="molecule type" value="Genomic_DNA"/>
</dbReference>
<dbReference type="EMBL" id="CM000139">
    <property type="protein sequence ID" value="EEE58073.1"/>
    <property type="molecule type" value="Genomic_DNA"/>
</dbReference>
<dbReference type="EMBL" id="AK105029">
    <property type="protein sequence ID" value="BAG97074.1"/>
    <property type="molecule type" value="mRNA"/>
</dbReference>
<dbReference type="SMR" id="Q6K9X3"/>
<dbReference type="FunCoup" id="Q6K9X3">
    <property type="interactions" value="144"/>
</dbReference>
<dbReference type="STRING" id="39947.Q6K9X3"/>
<dbReference type="PaxDb" id="39947-Q6K9X3"/>
<dbReference type="EnsemblPlants" id="Os02t0823400-01">
    <property type="protein sequence ID" value="Os02t0823400-01"/>
    <property type="gene ID" value="Os02g0823400"/>
</dbReference>
<dbReference type="GeneID" id="4331197"/>
<dbReference type="Gramene" id="Os02t0823400-01">
    <property type="protein sequence ID" value="Os02t0823400-01"/>
    <property type="gene ID" value="Os02g0823400"/>
</dbReference>
<dbReference type="KEGG" id="dosa:Os02g0823400"/>
<dbReference type="KEGG" id="osa:4331197"/>
<dbReference type="eggNOG" id="KOG3178">
    <property type="taxonomic scope" value="Eukaryota"/>
</dbReference>
<dbReference type="HOGENOM" id="CLU_005533_12_1_1"/>
<dbReference type="InParanoid" id="Q6K9X3"/>
<dbReference type="OMA" id="CTEPWTW"/>
<dbReference type="OrthoDB" id="1606438at2759"/>
<dbReference type="PlantReactome" id="R-OSA-1119316">
    <property type="pathway name" value="Phenylpropanoid biosynthesis"/>
</dbReference>
<dbReference type="PlantReactome" id="R-OSA-1119528">
    <property type="pathway name" value="Beta-alanine betaine biosynthesis"/>
</dbReference>
<dbReference type="SABIO-RK" id="Q6K9X3"/>
<dbReference type="Proteomes" id="UP000000763">
    <property type="component" value="Chromosome 2"/>
</dbReference>
<dbReference type="Proteomes" id="UP000007752">
    <property type="component" value="Chromosome 2"/>
</dbReference>
<dbReference type="Proteomes" id="UP000059680">
    <property type="component" value="Chromosome 2"/>
</dbReference>
<dbReference type="GO" id="GO:0008938">
    <property type="term" value="F:nicotinate N-methyltransferase activity"/>
    <property type="evidence" value="ECO:0000314"/>
    <property type="project" value="UniProtKB"/>
</dbReference>
<dbReference type="GO" id="GO:0008171">
    <property type="term" value="F:O-methyltransferase activity"/>
    <property type="evidence" value="ECO:0000318"/>
    <property type="project" value="GO_Central"/>
</dbReference>
<dbReference type="GO" id="GO:0046983">
    <property type="term" value="F:protein dimerization activity"/>
    <property type="evidence" value="ECO:0007669"/>
    <property type="project" value="InterPro"/>
</dbReference>
<dbReference type="GO" id="GO:0008757">
    <property type="term" value="F:S-adenosylmethionine-dependent methyltransferase activity"/>
    <property type="evidence" value="ECO:0000318"/>
    <property type="project" value="GO_Central"/>
</dbReference>
<dbReference type="GO" id="GO:0009058">
    <property type="term" value="P:biosynthetic process"/>
    <property type="evidence" value="ECO:0000318"/>
    <property type="project" value="GO_Central"/>
</dbReference>
<dbReference type="GO" id="GO:0032259">
    <property type="term" value="P:methylation"/>
    <property type="evidence" value="ECO:0000318"/>
    <property type="project" value="GO_Central"/>
</dbReference>
<dbReference type="GO" id="GO:1901847">
    <property type="term" value="P:nicotinate metabolic process"/>
    <property type="evidence" value="ECO:0000314"/>
    <property type="project" value="UniProtKB"/>
</dbReference>
<dbReference type="FunFam" id="1.10.10.10:FF:000604">
    <property type="entry name" value="Caffeic acid 3-O-methyltransferase"/>
    <property type="match status" value="1"/>
</dbReference>
<dbReference type="FunFam" id="3.40.50.150:FF:000223">
    <property type="entry name" value="Caffeic acid 3-O-methyltransferase"/>
    <property type="match status" value="1"/>
</dbReference>
<dbReference type="Gene3D" id="3.40.50.150">
    <property type="entry name" value="Vaccinia Virus protein VP39"/>
    <property type="match status" value="1"/>
</dbReference>
<dbReference type="Gene3D" id="1.10.10.10">
    <property type="entry name" value="Winged helix-like DNA-binding domain superfamily/Winged helix DNA-binding domain"/>
    <property type="match status" value="1"/>
</dbReference>
<dbReference type="InterPro" id="IPR016461">
    <property type="entry name" value="COMT-like"/>
</dbReference>
<dbReference type="InterPro" id="IPR001077">
    <property type="entry name" value="O_MeTrfase_dom"/>
</dbReference>
<dbReference type="InterPro" id="IPR012967">
    <property type="entry name" value="Plant_O-MeTrfase_dimerisation"/>
</dbReference>
<dbReference type="InterPro" id="IPR029063">
    <property type="entry name" value="SAM-dependent_MTases_sf"/>
</dbReference>
<dbReference type="InterPro" id="IPR036388">
    <property type="entry name" value="WH-like_DNA-bd_sf"/>
</dbReference>
<dbReference type="InterPro" id="IPR036390">
    <property type="entry name" value="WH_DNA-bd_sf"/>
</dbReference>
<dbReference type="PANTHER" id="PTHR11746">
    <property type="entry name" value="O-METHYLTRANSFERASE"/>
    <property type="match status" value="1"/>
</dbReference>
<dbReference type="Pfam" id="PF08100">
    <property type="entry name" value="Dimerisation"/>
    <property type="match status" value="1"/>
</dbReference>
<dbReference type="Pfam" id="PF00891">
    <property type="entry name" value="Methyltransf_2"/>
    <property type="match status" value="1"/>
</dbReference>
<dbReference type="PIRSF" id="PIRSF005739">
    <property type="entry name" value="O-mtase"/>
    <property type="match status" value="1"/>
</dbReference>
<dbReference type="SUPFAM" id="SSF53335">
    <property type="entry name" value="S-adenosyl-L-methionine-dependent methyltransferases"/>
    <property type="match status" value="1"/>
</dbReference>
<dbReference type="SUPFAM" id="SSF46785">
    <property type="entry name" value="Winged helix' DNA-binding domain"/>
    <property type="match status" value="1"/>
</dbReference>
<dbReference type="PROSITE" id="PS51683">
    <property type="entry name" value="SAM_OMT_II"/>
    <property type="match status" value="1"/>
</dbReference>
<proteinExistence type="evidence at protein level"/>
<protein>
    <recommendedName>
        <fullName evidence="3">Nicotinate N-methyltransferase 1</fullName>
        <ecNumber evidence="2">2.1.1.7</ecNumber>
    </recommendedName>
</protein>